<proteinExistence type="evidence at transcript level"/>
<feature type="chain" id="PRO_0000440325" description="Citrinin biosynthesis transcriptional activator mrl3">
    <location>
        <begin position="1"/>
        <end position="509"/>
    </location>
</feature>
<feature type="DNA-binding region" description="Zn(2)-C6 fungal-type" evidence="2">
    <location>
        <begin position="24"/>
        <end position="51"/>
    </location>
</feature>
<feature type="region of interest" description="Disordered" evidence="3">
    <location>
        <begin position="1"/>
        <end position="22"/>
    </location>
</feature>
<feature type="region of interest" description="Disordered" evidence="3">
    <location>
        <begin position="97"/>
        <end position="143"/>
    </location>
</feature>
<feature type="compositionally biased region" description="Low complexity" evidence="3">
    <location>
        <begin position="109"/>
        <end position="119"/>
    </location>
</feature>
<feature type="compositionally biased region" description="Polar residues" evidence="3">
    <location>
        <begin position="132"/>
        <end position="143"/>
    </location>
</feature>
<protein>
    <recommendedName>
        <fullName evidence="6">Citrinin biosynthesis transcriptional activator mrl3</fullName>
    </recommendedName>
</protein>
<reference key="1">
    <citation type="journal article" date="2016" name="Chem. Sci.">
        <title>The molecular steps of citrinin biosynthesis in fungi.</title>
        <authorList>
            <person name="He Y."/>
            <person name="Cox R.J."/>
        </authorList>
    </citation>
    <scope>NUCLEOTIDE SEQUENCE [GENOMIC DNA]</scope>
    <source>
        <strain>M7</strain>
    </source>
</reference>
<reference key="2">
    <citation type="journal article" date="2016" name="J. Agric. Food Chem.">
        <title>Effects of light intensity and color on the biomass, extracellular red pigment, and citrinin production of Monascus ruber.</title>
        <authorList>
            <person name="Wang L."/>
            <person name="Dai Y."/>
            <person name="Chen W."/>
            <person name="Shao Y."/>
            <person name="Chen F."/>
        </authorList>
    </citation>
    <scope>INDUCTION</scope>
    <source>
        <strain>M7</strain>
    </source>
</reference>
<sequence>MASTAHRQPSRPTTRQRQRTGRACEECRRRKLRCDGQQPRCGVCVDSGVTCEVNSQRRPRGPKKGYLTALRNRVAMLETRLPAQHLVGPLSEFNPLSTPLTNDHHDGCSVSSASSRSDSNPPPTVSEPDMSLPNTTTSVSSAPSFATCSKDIGGAEPITELVQAELNQLYFDRVHPSIQILHQRRYLGWARNAAKKTSRRCLQYAVWTLASLLSAQFQHLQDSFYQETKRTLEFSYLSGDSNAPVDTEEIQAWILIATYESMRTFHRSAWMSAGRAFRLVQLMRLHEIDSPTKPPVPEADLVETEEKRRVFWMAYFLDHLLSMRNNWPITLNEHVICTRLPAPDMEFQSGQPVLGAFLSEAIMDVMPQTTSPFNECVILATICGRSLFHAQQYSVRFVYGELAPNWTDQHQWLDNVLTNRLQILSQYYPSPTQICDPMLSFAHIMGQASVIHLYKGMASVVWAVDDGAWVVEYQRRALSAAQEIVKLAKGLTEFNFFKVCHTASLPCND</sequence>
<name>CTNR_MONRU</name>
<organism>
    <name type="scientific">Monascus ruber</name>
    <name type="common">Mold</name>
    <dbReference type="NCBI Taxonomy" id="89489"/>
    <lineage>
        <taxon>Eukaryota</taxon>
        <taxon>Fungi</taxon>
        <taxon>Dikarya</taxon>
        <taxon>Ascomycota</taxon>
        <taxon>Pezizomycotina</taxon>
        <taxon>Eurotiomycetes</taxon>
        <taxon>Eurotiomycetidae</taxon>
        <taxon>Eurotiales</taxon>
        <taxon>Aspergillaceae</taxon>
        <taxon>Monascus</taxon>
    </lineage>
</organism>
<dbReference type="EMBL" id="KT781075">
    <property type="protein sequence ID" value="ALI92652.1"/>
    <property type="molecule type" value="Genomic_DNA"/>
</dbReference>
<dbReference type="GO" id="GO:0005634">
    <property type="term" value="C:nucleus"/>
    <property type="evidence" value="ECO:0007669"/>
    <property type="project" value="UniProtKB-SubCell"/>
</dbReference>
<dbReference type="GO" id="GO:0003677">
    <property type="term" value="F:DNA binding"/>
    <property type="evidence" value="ECO:0007669"/>
    <property type="project" value="UniProtKB-KW"/>
</dbReference>
<dbReference type="GO" id="GO:0000981">
    <property type="term" value="F:DNA-binding transcription factor activity, RNA polymerase II-specific"/>
    <property type="evidence" value="ECO:0007669"/>
    <property type="project" value="InterPro"/>
</dbReference>
<dbReference type="GO" id="GO:0008270">
    <property type="term" value="F:zinc ion binding"/>
    <property type="evidence" value="ECO:0007669"/>
    <property type="project" value="InterPro"/>
</dbReference>
<dbReference type="GO" id="GO:0006351">
    <property type="term" value="P:DNA-templated transcription"/>
    <property type="evidence" value="ECO:0007669"/>
    <property type="project" value="InterPro"/>
</dbReference>
<dbReference type="CDD" id="cd12148">
    <property type="entry name" value="fungal_TF_MHR"/>
    <property type="match status" value="1"/>
</dbReference>
<dbReference type="CDD" id="cd00067">
    <property type="entry name" value="GAL4"/>
    <property type="match status" value="1"/>
</dbReference>
<dbReference type="Gene3D" id="4.10.240.10">
    <property type="entry name" value="Zn(2)-C6 fungal-type DNA-binding domain"/>
    <property type="match status" value="1"/>
</dbReference>
<dbReference type="InterPro" id="IPR050815">
    <property type="entry name" value="TF_fung"/>
</dbReference>
<dbReference type="InterPro" id="IPR007219">
    <property type="entry name" value="Transcription_factor_dom_fun"/>
</dbReference>
<dbReference type="InterPro" id="IPR036864">
    <property type="entry name" value="Zn2-C6_fun-type_DNA-bd_sf"/>
</dbReference>
<dbReference type="InterPro" id="IPR001138">
    <property type="entry name" value="Zn2Cys6_DnaBD"/>
</dbReference>
<dbReference type="PANTHER" id="PTHR47338:SF3">
    <property type="entry name" value="C6 FINGER DOMAIN TRANSCRIPTION FACTOR DBAA-RELATED"/>
    <property type="match status" value="1"/>
</dbReference>
<dbReference type="PANTHER" id="PTHR47338">
    <property type="entry name" value="ZN(II)2CYS6 TRANSCRIPTION FACTOR (EUROFUNG)-RELATED"/>
    <property type="match status" value="1"/>
</dbReference>
<dbReference type="Pfam" id="PF04082">
    <property type="entry name" value="Fungal_trans"/>
    <property type="match status" value="1"/>
</dbReference>
<dbReference type="Pfam" id="PF00172">
    <property type="entry name" value="Zn_clus"/>
    <property type="match status" value="1"/>
</dbReference>
<dbReference type="SMART" id="SM00906">
    <property type="entry name" value="Fungal_trans"/>
    <property type="match status" value="1"/>
</dbReference>
<dbReference type="SMART" id="SM00066">
    <property type="entry name" value="GAL4"/>
    <property type="match status" value="1"/>
</dbReference>
<dbReference type="SUPFAM" id="SSF57701">
    <property type="entry name" value="Zn2/Cys6 DNA-binding domain"/>
    <property type="match status" value="1"/>
</dbReference>
<dbReference type="PROSITE" id="PS00463">
    <property type="entry name" value="ZN2_CY6_FUNGAL_1"/>
    <property type="match status" value="1"/>
</dbReference>
<dbReference type="PROSITE" id="PS50048">
    <property type="entry name" value="ZN2_CY6_FUNGAL_2"/>
    <property type="match status" value="1"/>
</dbReference>
<accession>A0A162J452</accession>
<gene>
    <name evidence="5" type="primary">ctnA</name>
    <name evidence="6" type="synonym">mrl3</name>
</gene>
<comment type="function">
    <text evidence="7">Transcription factor that regulates the expression of the gene cluster that mediates the biosynthesis of the mycotoxin citrinin, a hepato-nephrotoxic compound to humans due to inhibition of respiration complex III (Ref.1).</text>
</comment>
<comment type="subcellular location">
    <subcellularLocation>
        <location evidence="1">Nucleus</location>
    </subcellularLocation>
</comment>
<comment type="induction">
    <text evidence="4">Expression is stimulated under green light conditions (PubMed:27998068).</text>
</comment>
<keyword id="KW-0238">DNA-binding</keyword>
<keyword id="KW-0479">Metal-binding</keyword>
<keyword id="KW-0539">Nucleus</keyword>
<keyword id="KW-0804">Transcription</keyword>
<keyword id="KW-0805">Transcription regulation</keyword>
<keyword id="KW-0862">Zinc</keyword>
<evidence type="ECO:0000255" key="1"/>
<evidence type="ECO:0000255" key="2">
    <source>
        <dbReference type="PROSITE-ProRule" id="PRU00227"/>
    </source>
</evidence>
<evidence type="ECO:0000256" key="3">
    <source>
        <dbReference type="SAM" id="MobiDB-lite"/>
    </source>
</evidence>
<evidence type="ECO:0000269" key="4">
    <source>
    </source>
</evidence>
<evidence type="ECO:0000303" key="5">
    <source>
    </source>
</evidence>
<evidence type="ECO:0000303" key="6">
    <source ref="1"/>
</evidence>
<evidence type="ECO:0000305" key="7">
    <source ref="1"/>
</evidence>